<reference key="1">
    <citation type="journal article" date="2007" name="BMC Plant Biol.">
        <title>Complete DNA sequences of the plastid genomes of two parasitic flowering plant species, Cuscuta reflexa and Cuscuta gronovii.</title>
        <authorList>
            <person name="Funk H.T."/>
            <person name="Berg S."/>
            <person name="Krupinska K."/>
            <person name="Maier U.-G."/>
            <person name="Krause K."/>
        </authorList>
    </citation>
    <scope>NUCLEOTIDE SEQUENCE [LARGE SCALE GENOMIC DNA]</scope>
    <scope>ABSENCE OF RNA EDITING</scope>
</reference>
<keyword id="KW-0934">Plastid</keyword>
<keyword id="KW-0687">Ribonucleoprotein</keyword>
<keyword id="KW-0689">Ribosomal protein</keyword>
<keyword id="KW-0694">RNA-binding</keyword>
<keyword id="KW-0699">rRNA-binding</keyword>
<gene>
    <name type="primary">rpl20</name>
</gene>
<name>RK20_CUSRE</name>
<feature type="chain" id="PRO_0000308467" description="Large ribosomal subunit protein bL20c">
    <location>
        <begin position="1"/>
        <end position="118"/>
    </location>
</feature>
<sequence>MTRIKRGSIARRRRKKMCFFASSFRGAHSRLTRTITQQGIRALVSADRDRDRQKRDFRRLWITRLNAVIREMGIYYNYSKLIRDLYNNQLLLNRKILSQIAISNSKCLYMISNGILQI</sequence>
<comment type="function">
    <text evidence="1">Binds directly to 23S ribosomal RNA and is necessary for the in vitro assembly process of the 50S ribosomal subunit. It is not involved in the protein synthesizing functions of that subunit (By similarity).</text>
</comment>
<comment type="subcellular location">
    <subcellularLocation>
        <location>Plastid</location>
    </subcellularLocation>
</comment>
<comment type="similarity">
    <text evidence="2">Belongs to the bacterial ribosomal protein bL20 family.</text>
</comment>
<comment type="caution">
    <text evidence="2">Young tissue from this organism is photosynthetic and contains some thylakoids, although the photosynthetic activity does not exceed the light compensation point.</text>
</comment>
<geneLocation type="plastid"/>
<accession>A7M986</accession>
<protein>
    <recommendedName>
        <fullName evidence="2">Large ribosomal subunit protein bL20c</fullName>
    </recommendedName>
    <alternativeName>
        <fullName>50S ribosomal protein L20, plastid</fullName>
    </alternativeName>
</protein>
<dbReference type="EMBL" id="AM711640">
    <property type="protein sequence ID" value="CAM98414.1"/>
    <property type="molecule type" value="Genomic_DNA"/>
</dbReference>
<dbReference type="RefSeq" id="YP_001430128.1">
    <property type="nucleotide sequence ID" value="NC_009766.1"/>
</dbReference>
<dbReference type="SMR" id="A7M986"/>
<dbReference type="GeneID" id="5536613"/>
<dbReference type="GO" id="GO:0009536">
    <property type="term" value="C:plastid"/>
    <property type="evidence" value="ECO:0007669"/>
    <property type="project" value="UniProtKB-SubCell"/>
</dbReference>
<dbReference type="GO" id="GO:1990904">
    <property type="term" value="C:ribonucleoprotein complex"/>
    <property type="evidence" value="ECO:0007669"/>
    <property type="project" value="UniProtKB-KW"/>
</dbReference>
<dbReference type="GO" id="GO:0005840">
    <property type="term" value="C:ribosome"/>
    <property type="evidence" value="ECO:0007669"/>
    <property type="project" value="UniProtKB-KW"/>
</dbReference>
<dbReference type="GO" id="GO:0019843">
    <property type="term" value="F:rRNA binding"/>
    <property type="evidence" value="ECO:0007669"/>
    <property type="project" value="UniProtKB-KW"/>
</dbReference>
<dbReference type="GO" id="GO:0003735">
    <property type="term" value="F:structural constituent of ribosome"/>
    <property type="evidence" value="ECO:0007669"/>
    <property type="project" value="InterPro"/>
</dbReference>
<dbReference type="GO" id="GO:0006412">
    <property type="term" value="P:translation"/>
    <property type="evidence" value="ECO:0007669"/>
    <property type="project" value="InterPro"/>
</dbReference>
<dbReference type="CDD" id="cd07026">
    <property type="entry name" value="Ribosomal_L20"/>
    <property type="match status" value="1"/>
</dbReference>
<dbReference type="FunFam" id="1.10.1900.20:FF:000001">
    <property type="entry name" value="50S ribosomal protein L20"/>
    <property type="match status" value="1"/>
</dbReference>
<dbReference type="Gene3D" id="6.10.160.10">
    <property type="match status" value="1"/>
</dbReference>
<dbReference type="Gene3D" id="1.10.1900.20">
    <property type="entry name" value="Ribosomal protein L20"/>
    <property type="match status" value="1"/>
</dbReference>
<dbReference type="HAMAP" id="MF_00382">
    <property type="entry name" value="Ribosomal_bL20"/>
    <property type="match status" value="1"/>
</dbReference>
<dbReference type="InterPro" id="IPR005813">
    <property type="entry name" value="Ribosomal_bL20"/>
</dbReference>
<dbReference type="InterPro" id="IPR049946">
    <property type="entry name" value="RIBOSOMAL_L20_CS"/>
</dbReference>
<dbReference type="InterPro" id="IPR035566">
    <property type="entry name" value="Ribosomal_protein_bL20_C"/>
</dbReference>
<dbReference type="NCBIfam" id="TIGR01032">
    <property type="entry name" value="rplT_bact"/>
    <property type="match status" value="1"/>
</dbReference>
<dbReference type="PANTHER" id="PTHR10986">
    <property type="entry name" value="39S RIBOSOMAL PROTEIN L20"/>
    <property type="match status" value="1"/>
</dbReference>
<dbReference type="Pfam" id="PF00453">
    <property type="entry name" value="Ribosomal_L20"/>
    <property type="match status" value="1"/>
</dbReference>
<dbReference type="PRINTS" id="PR00062">
    <property type="entry name" value="RIBOSOMALL20"/>
</dbReference>
<dbReference type="SUPFAM" id="SSF74731">
    <property type="entry name" value="Ribosomal protein L20"/>
    <property type="match status" value="1"/>
</dbReference>
<dbReference type="PROSITE" id="PS00937">
    <property type="entry name" value="RIBOSOMAL_L20"/>
    <property type="match status" value="1"/>
</dbReference>
<organism>
    <name type="scientific">Cuscuta reflexa</name>
    <name type="common">Southern Asian dodder</name>
    <dbReference type="NCBI Taxonomy" id="4129"/>
    <lineage>
        <taxon>Eukaryota</taxon>
        <taxon>Viridiplantae</taxon>
        <taxon>Streptophyta</taxon>
        <taxon>Embryophyta</taxon>
        <taxon>Tracheophyta</taxon>
        <taxon>Spermatophyta</taxon>
        <taxon>Magnoliopsida</taxon>
        <taxon>eudicotyledons</taxon>
        <taxon>Gunneridae</taxon>
        <taxon>Pentapetalae</taxon>
        <taxon>asterids</taxon>
        <taxon>lamiids</taxon>
        <taxon>Solanales</taxon>
        <taxon>Convolvulaceae</taxon>
        <taxon>Cuscuteae</taxon>
        <taxon>Cuscuta</taxon>
        <taxon>Cuscuta subgen. Monogynella</taxon>
    </lineage>
</organism>
<proteinExistence type="evidence at transcript level"/>
<evidence type="ECO:0000250" key="1"/>
<evidence type="ECO:0000305" key="2"/>